<gene>
    <name evidence="1" type="primary">murE</name>
    <name type="ordered locus">CF0632</name>
</gene>
<name>MURE_CHLFF</name>
<comment type="function">
    <text evidence="1">Catalyzes the addition of meso-diaminopimelic acid to the nucleotide precursor UDP-N-acetylmuramoyl-L-alanyl-D-glutamate (UMAG) in the biosynthesis of bacterial cell-wall peptidoglycan.</text>
</comment>
<comment type="catalytic activity">
    <reaction evidence="1">
        <text>UDP-N-acetyl-alpha-D-muramoyl-L-alanyl-D-glutamate + meso-2,6-diaminopimelate + ATP = UDP-N-acetyl-alpha-D-muramoyl-L-alanyl-gamma-D-glutamyl-meso-2,6-diaminopimelate + ADP + phosphate + H(+)</text>
        <dbReference type="Rhea" id="RHEA:23676"/>
        <dbReference type="ChEBI" id="CHEBI:15378"/>
        <dbReference type="ChEBI" id="CHEBI:30616"/>
        <dbReference type="ChEBI" id="CHEBI:43474"/>
        <dbReference type="ChEBI" id="CHEBI:57791"/>
        <dbReference type="ChEBI" id="CHEBI:83900"/>
        <dbReference type="ChEBI" id="CHEBI:83905"/>
        <dbReference type="ChEBI" id="CHEBI:456216"/>
        <dbReference type="EC" id="6.3.2.13"/>
    </reaction>
</comment>
<comment type="cofactor">
    <cofactor evidence="1">
        <name>Mg(2+)</name>
        <dbReference type="ChEBI" id="CHEBI:18420"/>
    </cofactor>
</comment>
<comment type="pathway">
    <text evidence="1">Cell wall biogenesis; peptidoglycan biosynthesis.</text>
</comment>
<comment type="subcellular location">
    <subcellularLocation>
        <location evidence="1">Cytoplasm</location>
    </subcellularLocation>
</comment>
<comment type="PTM">
    <text evidence="1">Carboxylation is probably crucial for Mg(2+) binding and, consequently, for the gamma-phosphate positioning of ATP.</text>
</comment>
<comment type="similarity">
    <text evidence="1">Belongs to the MurCDEF family. MurE subfamily.</text>
</comment>
<protein>
    <recommendedName>
        <fullName evidence="1">UDP-N-acetylmuramoyl-L-alanyl-D-glutamate--2,6-diaminopimelate ligase</fullName>
        <ecNumber evidence="1">6.3.2.13</ecNumber>
    </recommendedName>
    <alternativeName>
        <fullName evidence="1">Meso-A2pm-adding enzyme</fullName>
    </alternativeName>
    <alternativeName>
        <fullName evidence="1">Meso-diaminopimelate-adding enzyme</fullName>
    </alternativeName>
    <alternativeName>
        <fullName evidence="1">UDP-MurNAc-L-Ala-D-Glu:meso-diaminopimelate ligase</fullName>
    </alternativeName>
    <alternativeName>
        <fullName evidence="1">UDP-MurNAc-tripeptide synthetase</fullName>
    </alternativeName>
    <alternativeName>
        <fullName evidence="1">UDP-N-acetylmuramyl-tripeptide synthetase</fullName>
    </alternativeName>
</protein>
<reference key="1">
    <citation type="journal article" date="2006" name="DNA Res.">
        <title>Genome sequence of the cat pathogen, Chlamydophila felis.</title>
        <authorList>
            <person name="Azuma Y."/>
            <person name="Hirakawa H."/>
            <person name="Yamashita A."/>
            <person name="Cai Y."/>
            <person name="Rahman M.A."/>
            <person name="Suzuki H."/>
            <person name="Mitaku S."/>
            <person name="Toh H."/>
            <person name="Goto S."/>
            <person name="Murakami T."/>
            <person name="Sugi K."/>
            <person name="Hayashi H."/>
            <person name="Fukushi H."/>
            <person name="Hattori M."/>
            <person name="Kuhara S."/>
            <person name="Shirai M."/>
        </authorList>
    </citation>
    <scope>NUCLEOTIDE SEQUENCE [LARGE SCALE GENOMIC DNA]</scope>
    <source>
        <strain>Fe/C-56</strain>
    </source>
</reference>
<feature type="chain" id="PRO_1000012344" description="UDP-N-acetylmuramoyl-L-alanyl-D-glutamate--2,6-diaminopimelate ligase">
    <location>
        <begin position="1"/>
        <end position="485"/>
    </location>
</feature>
<feature type="short sequence motif" description="Meso-diaminopimelate recognition motif">
    <location>
        <begin position="405"/>
        <end position="408"/>
    </location>
</feature>
<feature type="binding site" evidence="1">
    <location>
        <position position="32"/>
    </location>
    <ligand>
        <name>UDP-N-acetyl-alpha-D-muramoyl-L-alanyl-D-glutamate</name>
        <dbReference type="ChEBI" id="CHEBI:83900"/>
    </ligand>
</feature>
<feature type="binding site" evidence="1">
    <location>
        <begin position="111"/>
        <end position="117"/>
    </location>
    <ligand>
        <name>ATP</name>
        <dbReference type="ChEBI" id="CHEBI:30616"/>
    </ligand>
</feature>
<feature type="binding site" evidence="1">
    <location>
        <begin position="153"/>
        <end position="154"/>
    </location>
    <ligand>
        <name>UDP-N-acetyl-alpha-D-muramoyl-L-alanyl-D-glutamate</name>
        <dbReference type="ChEBI" id="CHEBI:83900"/>
    </ligand>
</feature>
<feature type="binding site" evidence="1">
    <location>
        <position position="180"/>
    </location>
    <ligand>
        <name>UDP-N-acetyl-alpha-D-muramoyl-L-alanyl-D-glutamate</name>
        <dbReference type="ChEBI" id="CHEBI:83900"/>
    </ligand>
</feature>
<feature type="binding site" evidence="1">
    <location>
        <position position="188"/>
    </location>
    <ligand>
        <name>UDP-N-acetyl-alpha-D-muramoyl-L-alanyl-D-glutamate</name>
        <dbReference type="ChEBI" id="CHEBI:83900"/>
    </ligand>
</feature>
<feature type="binding site" evidence="1">
    <location>
        <position position="382"/>
    </location>
    <ligand>
        <name>meso-2,6-diaminopimelate</name>
        <dbReference type="ChEBI" id="CHEBI:57791"/>
    </ligand>
</feature>
<feature type="binding site" evidence="1">
    <location>
        <begin position="405"/>
        <end position="408"/>
    </location>
    <ligand>
        <name>meso-2,6-diaminopimelate</name>
        <dbReference type="ChEBI" id="CHEBI:57791"/>
    </ligand>
</feature>
<feature type="binding site" evidence="1">
    <location>
        <position position="455"/>
    </location>
    <ligand>
        <name>meso-2,6-diaminopimelate</name>
        <dbReference type="ChEBI" id="CHEBI:57791"/>
    </ligand>
</feature>
<feature type="binding site" evidence="1">
    <location>
        <position position="459"/>
    </location>
    <ligand>
        <name>meso-2,6-diaminopimelate</name>
        <dbReference type="ChEBI" id="CHEBI:57791"/>
    </ligand>
</feature>
<feature type="modified residue" description="N6-carboxylysine" evidence="1">
    <location>
        <position position="220"/>
    </location>
</feature>
<accession>Q253Y4</accession>
<sequence>MNLKELLHNIDIDAKVYGKISPIEVRNLTKDSRNIGFGDIFIANKGKRCDGNDFASLAVENGAIAVVSSIYNPFLSVVQIISPNLSLLEAQLAAKYYNYPSRKLCVVGITGTNGKTTVSHLIKFLFDACDKPSGLIGTIEHILGNNRIQDGFTTPESCLLQKYLAEMVKSNLTAAVIETSSIGLVLDRLANVEFDVGVLTNVTLDHLDFHDSFEEYIKAKLQLFAQLSDSGLAVVNNDLPQAKQFLEATRAVPVTYGIEQLADYRASNLRFSPFGADFDLIHKGEIFPCHSPLIGQYNVYNVLAAIAVTHQRLNCDLQQLVSLVASVKSPRGRLEPIQSGPCPIYIDYAHTPDALDNVCQTLRTLLPSGGKLIVVFGCGGDRDRSKRKIMAQVVEKYGFAVVTSDNPRGEDPETIVNEICSGFVKRNFSIEIDRKQAITYALSIASDRDIVLVAGKGHETYQIFKHQTIAFDDREVVHEVLSSYV</sequence>
<dbReference type="EC" id="6.3.2.13" evidence="1"/>
<dbReference type="EMBL" id="AP006861">
    <property type="protein sequence ID" value="BAE81404.1"/>
    <property type="molecule type" value="Genomic_DNA"/>
</dbReference>
<dbReference type="RefSeq" id="WP_011458183.1">
    <property type="nucleotide sequence ID" value="NC_007899.1"/>
</dbReference>
<dbReference type="SMR" id="Q253Y4"/>
<dbReference type="STRING" id="264202.CF0632"/>
<dbReference type="KEGG" id="cfe:CF0632"/>
<dbReference type="eggNOG" id="COG0769">
    <property type="taxonomic scope" value="Bacteria"/>
</dbReference>
<dbReference type="HOGENOM" id="CLU_022291_4_1_0"/>
<dbReference type="OrthoDB" id="9800958at2"/>
<dbReference type="UniPathway" id="UPA00219"/>
<dbReference type="Proteomes" id="UP000001260">
    <property type="component" value="Chromosome"/>
</dbReference>
<dbReference type="GO" id="GO:0005737">
    <property type="term" value="C:cytoplasm"/>
    <property type="evidence" value="ECO:0007669"/>
    <property type="project" value="UniProtKB-SubCell"/>
</dbReference>
<dbReference type="GO" id="GO:0005524">
    <property type="term" value="F:ATP binding"/>
    <property type="evidence" value="ECO:0007669"/>
    <property type="project" value="UniProtKB-UniRule"/>
</dbReference>
<dbReference type="GO" id="GO:0000287">
    <property type="term" value="F:magnesium ion binding"/>
    <property type="evidence" value="ECO:0007669"/>
    <property type="project" value="UniProtKB-UniRule"/>
</dbReference>
<dbReference type="GO" id="GO:0008765">
    <property type="term" value="F:UDP-N-acetylmuramoylalanyl-D-glutamate-2,6-diaminopimelate ligase activity"/>
    <property type="evidence" value="ECO:0007669"/>
    <property type="project" value="UniProtKB-UniRule"/>
</dbReference>
<dbReference type="GO" id="GO:0051301">
    <property type="term" value="P:cell division"/>
    <property type="evidence" value="ECO:0007669"/>
    <property type="project" value="UniProtKB-KW"/>
</dbReference>
<dbReference type="GO" id="GO:0071555">
    <property type="term" value="P:cell wall organization"/>
    <property type="evidence" value="ECO:0007669"/>
    <property type="project" value="UniProtKB-KW"/>
</dbReference>
<dbReference type="GO" id="GO:0009252">
    <property type="term" value="P:peptidoglycan biosynthetic process"/>
    <property type="evidence" value="ECO:0007669"/>
    <property type="project" value="UniProtKB-UniRule"/>
</dbReference>
<dbReference type="GO" id="GO:0008360">
    <property type="term" value="P:regulation of cell shape"/>
    <property type="evidence" value="ECO:0007669"/>
    <property type="project" value="UniProtKB-KW"/>
</dbReference>
<dbReference type="Gene3D" id="3.90.190.20">
    <property type="entry name" value="Mur ligase, C-terminal domain"/>
    <property type="match status" value="1"/>
</dbReference>
<dbReference type="Gene3D" id="3.40.1190.10">
    <property type="entry name" value="Mur-like, catalytic domain"/>
    <property type="match status" value="1"/>
</dbReference>
<dbReference type="Gene3D" id="3.40.1390.10">
    <property type="entry name" value="MurE/MurF, N-terminal domain"/>
    <property type="match status" value="1"/>
</dbReference>
<dbReference type="HAMAP" id="MF_00208">
    <property type="entry name" value="MurE"/>
    <property type="match status" value="1"/>
</dbReference>
<dbReference type="InterPro" id="IPR036565">
    <property type="entry name" value="Mur-like_cat_sf"/>
</dbReference>
<dbReference type="InterPro" id="IPR004101">
    <property type="entry name" value="Mur_ligase_C"/>
</dbReference>
<dbReference type="InterPro" id="IPR036615">
    <property type="entry name" value="Mur_ligase_C_dom_sf"/>
</dbReference>
<dbReference type="InterPro" id="IPR013221">
    <property type="entry name" value="Mur_ligase_cen"/>
</dbReference>
<dbReference type="InterPro" id="IPR000713">
    <property type="entry name" value="Mur_ligase_N"/>
</dbReference>
<dbReference type="InterPro" id="IPR035911">
    <property type="entry name" value="MurE/MurF_N"/>
</dbReference>
<dbReference type="InterPro" id="IPR005761">
    <property type="entry name" value="UDP-N-AcMur-Glu-dNH2Pim_ligase"/>
</dbReference>
<dbReference type="NCBIfam" id="TIGR01085">
    <property type="entry name" value="murE"/>
    <property type="match status" value="1"/>
</dbReference>
<dbReference type="NCBIfam" id="NF001126">
    <property type="entry name" value="PRK00139.1-4"/>
    <property type="match status" value="1"/>
</dbReference>
<dbReference type="PANTHER" id="PTHR23135">
    <property type="entry name" value="MUR LIGASE FAMILY MEMBER"/>
    <property type="match status" value="1"/>
</dbReference>
<dbReference type="PANTHER" id="PTHR23135:SF4">
    <property type="entry name" value="UDP-N-ACETYLMURAMOYL-L-ALANYL-D-GLUTAMATE--2,6-DIAMINOPIMELATE LIGASE MURE HOMOLOG, CHLOROPLASTIC"/>
    <property type="match status" value="1"/>
</dbReference>
<dbReference type="Pfam" id="PF01225">
    <property type="entry name" value="Mur_ligase"/>
    <property type="match status" value="1"/>
</dbReference>
<dbReference type="Pfam" id="PF02875">
    <property type="entry name" value="Mur_ligase_C"/>
    <property type="match status" value="1"/>
</dbReference>
<dbReference type="Pfam" id="PF08245">
    <property type="entry name" value="Mur_ligase_M"/>
    <property type="match status" value="1"/>
</dbReference>
<dbReference type="SUPFAM" id="SSF53623">
    <property type="entry name" value="MurD-like peptide ligases, catalytic domain"/>
    <property type="match status" value="1"/>
</dbReference>
<dbReference type="SUPFAM" id="SSF53244">
    <property type="entry name" value="MurD-like peptide ligases, peptide-binding domain"/>
    <property type="match status" value="1"/>
</dbReference>
<dbReference type="SUPFAM" id="SSF63418">
    <property type="entry name" value="MurE/MurF N-terminal domain"/>
    <property type="match status" value="1"/>
</dbReference>
<organism>
    <name type="scientific">Chlamydia felis (strain Fe/C-56)</name>
    <name type="common">Chlamydophila felis</name>
    <dbReference type="NCBI Taxonomy" id="264202"/>
    <lineage>
        <taxon>Bacteria</taxon>
        <taxon>Pseudomonadati</taxon>
        <taxon>Chlamydiota</taxon>
        <taxon>Chlamydiia</taxon>
        <taxon>Chlamydiales</taxon>
        <taxon>Chlamydiaceae</taxon>
        <taxon>Chlamydia/Chlamydophila group</taxon>
        <taxon>Chlamydia</taxon>
    </lineage>
</organism>
<keyword id="KW-0067">ATP-binding</keyword>
<keyword id="KW-0131">Cell cycle</keyword>
<keyword id="KW-0132">Cell division</keyword>
<keyword id="KW-0133">Cell shape</keyword>
<keyword id="KW-0961">Cell wall biogenesis/degradation</keyword>
<keyword id="KW-0963">Cytoplasm</keyword>
<keyword id="KW-0436">Ligase</keyword>
<keyword id="KW-0460">Magnesium</keyword>
<keyword id="KW-0547">Nucleotide-binding</keyword>
<keyword id="KW-0573">Peptidoglycan synthesis</keyword>
<evidence type="ECO:0000255" key="1">
    <source>
        <dbReference type="HAMAP-Rule" id="MF_00208"/>
    </source>
</evidence>
<proteinExistence type="inferred from homology"/>